<evidence type="ECO:0000255" key="1">
    <source>
        <dbReference type="HAMAP-Rule" id="MF_00378"/>
    </source>
</evidence>
<name>EX7L_BACAA</name>
<comment type="function">
    <text evidence="1">Bidirectionally degrades single-stranded DNA into large acid-insoluble oligonucleotides, which are then degraded further into small acid-soluble oligonucleotides.</text>
</comment>
<comment type="catalytic activity">
    <reaction evidence="1">
        <text>Exonucleolytic cleavage in either 5'- to 3'- or 3'- to 5'-direction to yield nucleoside 5'-phosphates.</text>
        <dbReference type="EC" id="3.1.11.6"/>
    </reaction>
</comment>
<comment type="subunit">
    <text evidence="1">Heterooligomer composed of large and small subunits.</text>
</comment>
<comment type="subcellular location">
    <subcellularLocation>
        <location evidence="1">Cytoplasm</location>
    </subcellularLocation>
</comment>
<comment type="similarity">
    <text evidence="1">Belongs to the XseA family.</text>
</comment>
<sequence length="452" mass="51424">MEKQYLTVTALTRYIKTKIEYDPHLQSVWLKGEISNFKNHSRGHMYFTLKDENARIAAVMFAGHNRNIKFRPENGMKVLVKGKISVYEASGSYQIYIQDMQPDGIGNLHLAYEQLKVRLEEEGLFSQVYKKTIPPYAKTIGVITSPTGAAIRDIITTIKRRYPIGNVIVFPVLVQGESAAPSIVQAIRTANEMEEIDVLIVGRGGGSIEELWAFNEEMVARAIFKSEIPIISAVGHETDFTIADFVADLRAPTPTAAAELAAPNIIELQEKVLQRTLRLQRAMRELVHKKEEKLQVLQKSYAFRYPRQVYEQKEEQLDRALEQLVLAKERYIDKKVNQLKQLSFYLEKHHPSQKIMQTKVAVETLQKQLQREMQTLLQAKEFAFVRAAQKLEALSPLKVMMRGYGLVYDEEKQVLKSVKDVSLGDAVSVQLQDGILDCSVSGIEERELNNGK</sequence>
<gene>
    <name evidence="1" type="primary">xseA</name>
    <name type="ordered locus">BAA_4421</name>
</gene>
<protein>
    <recommendedName>
        <fullName evidence="1">Exodeoxyribonuclease 7 large subunit</fullName>
        <ecNumber evidence="1">3.1.11.6</ecNumber>
    </recommendedName>
    <alternativeName>
        <fullName evidence="1">Exodeoxyribonuclease VII large subunit</fullName>
        <shortName evidence="1">Exonuclease VII large subunit</shortName>
    </alternativeName>
</protein>
<reference key="1">
    <citation type="submission" date="2009-04" db="EMBL/GenBank/DDBJ databases">
        <title>Genome sequence of Bacillus anthracis A0248.</title>
        <authorList>
            <person name="Dodson R.J."/>
            <person name="Munk A.C."/>
            <person name="Bruce D."/>
            <person name="Detter C."/>
            <person name="Tapia R."/>
            <person name="Sutton G."/>
            <person name="Sims D."/>
            <person name="Brettin T."/>
        </authorList>
    </citation>
    <scope>NUCLEOTIDE SEQUENCE [LARGE SCALE GENOMIC DNA]</scope>
    <source>
        <strain>A0248</strain>
    </source>
</reference>
<proteinExistence type="inferred from homology"/>
<organism>
    <name type="scientific">Bacillus anthracis (strain A0248)</name>
    <dbReference type="NCBI Taxonomy" id="592021"/>
    <lineage>
        <taxon>Bacteria</taxon>
        <taxon>Bacillati</taxon>
        <taxon>Bacillota</taxon>
        <taxon>Bacilli</taxon>
        <taxon>Bacillales</taxon>
        <taxon>Bacillaceae</taxon>
        <taxon>Bacillus</taxon>
        <taxon>Bacillus cereus group</taxon>
    </lineage>
</organism>
<dbReference type="EC" id="3.1.11.6" evidence="1"/>
<dbReference type="EMBL" id="CP001598">
    <property type="protein sequence ID" value="ACQ50543.1"/>
    <property type="molecule type" value="Genomic_DNA"/>
</dbReference>
<dbReference type="RefSeq" id="WP_000415259.1">
    <property type="nucleotide sequence ID" value="NC_012659.1"/>
</dbReference>
<dbReference type="SMR" id="C3P7V9"/>
<dbReference type="GeneID" id="45024063"/>
<dbReference type="KEGG" id="bai:BAA_4421"/>
<dbReference type="HOGENOM" id="CLU_023625_3_1_9"/>
<dbReference type="GO" id="GO:0005737">
    <property type="term" value="C:cytoplasm"/>
    <property type="evidence" value="ECO:0007669"/>
    <property type="project" value="UniProtKB-SubCell"/>
</dbReference>
<dbReference type="GO" id="GO:0009318">
    <property type="term" value="C:exodeoxyribonuclease VII complex"/>
    <property type="evidence" value="ECO:0007669"/>
    <property type="project" value="InterPro"/>
</dbReference>
<dbReference type="GO" id="GO:0008855">
    <property type="term" value="F:exodeoxyribonuclease VII activity"/>
    <property type="evidence" value="ECO:0007669"/>
    <property type="project" value="UniProtKB-UniRule"/>
</dbReference>
<dbReference type="GO" id="GO:0003676">
    <property type="term" value="F:nucleic acid binding"/>
    <property type="evidence" value="ECO:0007669"/>
    <property type="project" value="InterPro"/>
</dbReference>
<dbReference type="GO" id="GO:0006308">
    <property type="term" value="P:DNA catabolic process"/>
    <property type="evidence" value="ECO:0007669"/>
    <property type="project" value="UniProtKB-UniRule"/>
</dbReference>
<dbReference type="CDD" id="cd04489">
    <property type="entry name" value="ExoVII_LU_OBF"/>
    <property type="match status" value="1"/>
</dbReference>
<dbReference type="HAMAP" id="MF_00378">
    <property type="entry name" value="Exonuc_7_L"/>
    <property type="match status" value="1"/>
</dbReference>
<dbReference type="InterPro" id="IPR003753">
    <property type="entry name" value="Exonuc_VII_L"/>
</dbReference>
<dbReference type="InterPro" id="IPR020579">
    <property type="entry name" value="Exonuc_VII_lsu_C"/>
</dbReference>
<dbReference type="InterPro" id="IPR025824">
    <property type="entry name" value="OB-fold_nuc-bd_dom"/>
</dbReference>
<dbReference type="NCBIfam" id="TIGR00237">
    <property type="entry name" value="xseA"/>
    <property type="match status" value="1"/>
</dbReference>
<dbReference type="PANTHER" id="PTHR30008">
    <property type="entry name" value="EXODEOXYRIBONUCLEASE 7 LARGE SUBUNIT"/>
    <property type="match status" value="1"/>
</dbReference>
<dbReference type="PANTHER" id="PTHR30008:SF0">
    <property type="entry name" value="EXODEOXYRIBONUCLEASE 7 LARGE SUBUNIT"/>
    <property type="match status" value="1"/>
</dbReference>
<dbReference type="Pfam" id="PF02601">
    <property type="entry name" value="Exonuc_VII_L"/>
    <property type="match status" value="1"/>
</dbReference>
<dbReference type="Pfam" id="PF13742">
    <property type="entry name" value="tRNA_anti_2"/>
    <property type="match status" value="1"/>
</dbReference>
<keyword id="KW-0963">Cytoplasm</keyword>
<keyword id="KW-0269">Exonuclease</keyword>
<keyword id="KW-0378">Hydrolase</keyword>
<keyword id="KW-0540">Nuclease</keyword>
<accession>C3P7V9</accession>
<feature type="chain" id="PRO_1000200657" description="Exodeoxyribonuclease 7 large subunit">
    <location>
        <begin position="1"/>
        <end position="452"/>
    </location>
</feature>